<reference key="1">
    <citation type="journal article" date="2003" name="Proc. Natl. Acad. Sci. U.S.A.">
        <title>Complete genome sequence of the marine planctomycete Pirellula sp. strain 1.</title>
        <authorList>
            <person name="Gloeckner F.O."/>
            <person name="Kube M."/>
            <person name="Bauer M."/>
            <person name="Teeling H."/>
            <person name="Lombardot T."/>
            <person name="Ludwig W."/>
            <person name="Gade D."/>
            <person name="Beck A."/>
            <person name="Borzym K."/>
            <person name="Heitmann K."/>
            <person name="Rabus R."/>
            <person name="Schlesner H."/>
            <person name="Amann R."/>
            <person name="Reinhardt R."/>
        </authorList>
    </citation>
    <scope>NUCLEOTIDE SEQUENCE [LARGE SCALE GENOMIC DNA]</scope>
    <source>
        <strain>DSM 10527 / NCIMB 13988 / SH1</strain>
    </source>
</reference>
<feature type="chain" id="PRO_0000234757" description="Tyrosine--tRNA ligase">
    <location>
        <begin position="1"/>
        <end position="438"/>
    </location>
</feature>
<feature type="domain" description="S4 RNA-binding" evidence="1">
    <location>
        <begin position="370"/>
        <end position="436"/>
    </location>
</feature>
<feature type="short sequence motif" description="'HIGH' region">
    <location>
        <begin position="52"/>
        <end position="61"/>
    </location>
</feature>
<feature type="short sequence motif" description="'KMSKS' region">
    <location>
        <begin position="243"/>
        <end position="247"/>
    </location>
</feature>
<feature type="binding site" evidence="1">
    <location>
        <position position="47"/>
    </location>
    <ligand>
        <name>L-tyrosine</name>
        <dbReference type="ChEBI" id="CHEBI:58315"/>
    </ligand>
</feature>
<feature type="binding site" evidence="1">
    <location>
        <position position="183"/>
    </location>
    <ligand>
        <name>L-tyrosine</name>
        <dbReference type="ChEBI" id="CHEBI:58315"/>
    </ligand>
</feature>
<feature type="binding site" evidence="1">
    <location>
        <position position="187"/>
    </location>
    <ligand>
        <name>L-tyrosine</name>
        <dbReference type="ChEBI" id="CHEBI:58315"/>
    </ligand>
</feature>
<feature type="binding site" evidence="1">
    <location>
        <position position="246"/>
    </location>
    <ligand>
        <name>ATP</name>
        <dbReference type="ChEBI" id="CHEBI:30616"/>
    </ligand>
</feature>
<organism>
    <name type="scientific">Rhodopirellula baltica (strain DSM 10527 / NCIMB 13988 / SH1)</name>
    <dbReference type="NCBI Taxonomy" id="243090"/>
    <lineage>
        <taxon>Bacteria</taxon>
        <taxon>Pseudomonadati</taxon>
        <taxon>Planctomycetota</taxon>
        <taxon>Planctomycetia</taxon>
        <taxon>Pirellulales</taxon>
        <taxon>Pirellulaceae</taxon>
        <taxon>Rhodopirellula</taxon>
    </lineage>
</organism>
<keyword id="KW-0030">Aminoacyl-tRNA synthetase</keyword>
<keyword id="KW-0067">ATP-binding</keyword>
<keyword id="KW-0963">Cytoplasm</keyword>
<keyword id="KW-0436">Ligase</keyword>
<keyword id="KW-0547">Nucleotide-binding</keyword>
<keyword id="KW-0648">Protein biosynthesis</keyword>
<keyword id="KW-1185">Reference proteome</keyword>
<keyword id="KW-0694">RNA-binding</keyword>
<comment type="function">
    <text evidence="1">Catalyzes the attachment of tyrosine to tRNA(Tyr) in a two-step reaction: tyrosine is first activated by ATP to form Tyr-AMP and then transferred to the acceptor end of tRNA(Tyr).</text>
</comment>
<comment type="catalytic activity">
    <reaction evidence="1">
        <text>tRNA(Tyr) + L-tyrosine + ATP = L-tyrosyl-tRNA(Tyr) + AMP + diphosphate + H(+)</text>
        <dbReference type="Rhea" id="RHEA:10220"/>
        <dbReference type="Rhea" id="RHEA-COMP:9706"/>
        <dbReference type="Rhea" id="RHEA-COMP:9707"/>
        <dbReference type="ChEBI" id="CHEBI:15378"/>
        <dbReference type="ChEBI" id="CHEBI:30616"/>
        <dbReference type="ChEBI" id="CHEBI:33019"/>
        <dbReference type="ChEBI" id="CHEBI:58315"/>
        <dbReference type="ChEBI" id="CHEBI:78442"/>
        <dbReference type="ChEBI" id="CHEBI:78536"/>
        <dbReference type="ChEBI" id="CHEBI:456215"/>
        <dbReference type="EC" id="6.1.1.1"/>
    </reaction>
</comment>
<comment type="subunit">
    <text evidence="1">Homodimer.</text>
</comment>
<comment type="subcellular location">
    <subcellularLocation>
        <location evidence="1">Cytoplasm</location>
    </subcellularLocation>
</comment>
<comment type="similarity">
    <text evidence="1">Belongs to the class-I aminoacyl-tRNA synthetase family. TyrS type 1 subfamily.</text>
</comment>
<proteinExistence type="inferred from homology"/>
<evidence type="ECO:0000255" key="1">
    <source>
        <dbReference type="HAMAP-Rule" id="MF_02006"/>
    </source>
</evidence>
<accession>Q7UM14</accession>
<name>SYY_RHOBA</name>
<sequence length="438" mass="48730">MPKRIRMTTSNATNSLIEDLRWRGLLNQTTDENGIAELLNSGPQTIYIGFDPTATSLHVGGMMQLMMLRRFQRAGHNPIALVGGATGMIGDPSGKSEERNLLSADQLQKNVDGVAAQMRHFLDFEGDNAAKLLNNFDWMKDYSYLEFLRDVGKNFPVGAMMGKESVRSRLESEAGLSYTEFSYMLLQAYDFVNLAQTHDCRIQAGGSDQWGNITAGIDLGRRMLGKQLFGITAPLLTTSDGRKMGKTESGAVWLDPERTSPYAFYQYWINVADEDVMRCLAYLTEIERAEYDELEDKTKNDPGQRTAQKRLAQWLTELVHGEAGVQSAQRATQILFGGELGDTTDSQLREIFADVPSCDVPKSALEGEGLWIVEALQTAKLCNSGGDARRALSEGGVYVNNTRVEDVQKRLTVDDLDGRSVLVLRRGKRKYALLKIQD</sequence>
<protein>
    <recommendedName>
        <fullName evidence="1">Tyrosine--tRNA ligase</fullName>
        <ecNumber evidence="1">6.1.1.1</ecNumber>
    </recommendedName>
    <alternativeName>
        <fullName evidence="1">Tyrosyl-tRNA synthetase</fullName>
        <shortName evidence="1">TyrRS</shortName>
    </alternativeName>
</protein>
<gene>
    <name evidence="1" type="primary">tyrS</name>
    <name type="ordered locus">RB9134</name>
</gene>
<dbReference type="EC" id="6.1.1.1" evidence="1"/>
<dbReference type="EMBL" id="BX294149">
    <property type="protein sequence ID" value="CAD76103.1"/>
    <property type="molecule type" value="Genomic_DNA"/>
</dbReference>
<dbReference type="RefSeq" id="NP_868726.1">
    <property type="nucleotide sequence ID" value="NC_005027.1"/>
</dbReference>
<dbReference type="SMR" id="Q7UM14"/>
<dbReference type="FunCoup" id="Q7UM14">
    <property type="interactions" value="540"/>
</dbReference>
<dbReference type="STRING" id="243090.RB9134"/>
<dbReference type="EnsemblBacteria" id="CAD76103">
    <property type="protein sequence ID" value="CAD76103"/>
    <property type="gene ID" value="RB9134"/>
</dbReference>
<dbReference type="KEGG" id="rba:RB9134"/>
<dbReference type="PATRIC" id="fig|243090.15.peg.4378"/>
<dbReference type="eggNOG" id="COG0162">
    <property type="taxonomic scope" value="Bacteria"/>
</dbReference>
<dbReference type="HOGENOM" id="CLU_024003_0_3_0"/>
<dbReference type="InParanoid" id="Q7UM14"/>
<dbReference type="OrthoDB" id="9804243at2"/>
<dbReference type="Proteomes" id="UP000001025">
    <property type="component" value="Chromosome"/>
</dbReference>
<dbReference type="GO" id="GO:0005829">
    <property type="term" value="C:cytosol"/>
    <property type="evidence" value="ECO:0000318"/>
    <property type="project" value="GO_Central"/>
</dbReference>
<dbReference type="GO" id="GO:0005524">
    <property type="term" value="F:ATP binding"/>
    <property type="evidence" value="ECO:0007669"/>
    <property type="project" value="UniProtKB-UniRule"/>
</dbReference>
<dbReference type="GO" id="GO:0003723">
    <property type="term" value="F:RNA binding"/>
    <property type="evidence" value="ECO:0007669"/>
    <property type="project" value="UniProtKB-KW"/>
</dbReference>
<dbReference type="GO" id="GO:0004831">
    <property type="term" value="F:tyrosine-tRNA ligase activity"/>
    <property type="evidence" value="ECO:0000318"/>
    <property type="project" value="GO_Central"/>
</dbReference>
<dbReference type="GO" id="GO:0043039">
    <property type="term" value="P:tRNA aminoacylation"/>
    <property type="evidence" value="ECO:0000318"/>
    <property type="project" value="GO_Central"/>
</dbReference>
<dbReference type="GO" id="GO:0006437">
    <property type="term" value="P:tyrosyl-tRNA aminoacylation"/>
    <property type="evidence" value="ECO:0007669"/>
    <property type="project" value="UniProtKB-UniRule"/>
</dbReference>
<dbReference type="CDD" id="cd00165">
    <property type="entry name" value="S4"/>
    <property type="match status" value="1"/>
</dbReference>
<dbReference type="CDD" id="cd00805">
    <property type="entry name" value="TyrRS_core"/>
    <property type="match status" value="1"/>
</dbReference>
<dbReference type="FunFam" id="1.10.240.10:FF:000001">
    <property type="entry name" value="Tyrosine--tRNA ligase"/>
    <property type="match status" value="1"/>
</dbReference>
<dbReference type="FunFam" id="3.10.290.10:FF:000014">
    <property type="entry name" value="Tyrosine--tRNA ligase"/>
    <property type="match status" value="1"/>
</dbReference>
<dbReference type="FunFam" id="3.40.50.620:FF:000008">
    <property type="entry name" value="Tyrosine--tRNA ligase"/>
    <property type="match status" value="1"/>
</dbReference>
<dbReference type="Gene3D" id="3.40.50.620">
    <property type="entry name" value="HUPs"/>
    <property type="match status" value="1"/>
</dbReference>
<dbReference type="Gene3D" id="3.10.290.10">
    <property type="entry name" value="RNA-binding S4 domain"/>
    <property type="match status" value="1"/>
</dbReference>
<dbReference type="Gene3D" id="1.10.240.10">
    <property type="entry name" value="Tyrosyl-Transfer RNA Synthetase"/>
    <property type="match status" value="1"/>
</dbReference>
<dbReference type="HAMAP" id="MF_02006">
    <property type="entry name" value="Tyr_tRNA_synth_type1"/>
    <property type="match status" value="1"/>
</dbReference>
<dbReference type="InterPro" id="IPR002305">
    <property type="entry name" value="aa-tRNA-synth_Ic"/>
</dbReference>
<dbReference type="InterPro" id="IPR014729">
    <property type="entry name" value="Rossmann-like_a/b/a_fold"/>
</dbReference>
<dbReference type="InterPro" id="IPR036986">
    <property type="entry name" value="S4_RNA-bd_sf"/>
</dbReference>
<dbReference type="InterPro" id="IPR054608">
    <property type="entry name" value="SYY-like_C"/>
</dbReference>
<dbReference type="InterPro" id="IPR002307">
    <property type="entry name" value="Tyr-tRNA-ligase"/>
</dbReference>
<dbReference type="InterPro" id="IPR024088">
    <property type="entry name" value="Tyr-tRNA-ligase_bac-type"/>
</dbReference>
<dbReference type="InterPro" id="IPR024107">
    <property type="entry name" value="Tyr-tRNA-ligase_bac_1"/>
</dbReference>
<dbReference type="NCBIfam" id="TIGR00234">
    <property type="entry name" value="tyrS"/>
    <property type="match status" value="1"/>
</dbReference>
<dbReference type="PANTHER" id="PTHR11766:SF0">
    <property type="entry name" value="TYROSINE--TRNA LIGASE, MITOCHONDRIAL"/>
    <property type="match status" value="1"/>
</dbReference>
<dbReference type="PANTHER" id="PTHR11766">
    <property type="entry name" value="TYROSYL-TRNA SYNTHETASE"/>
    <property type="match status" value="1"/>
</dbReference>
<dbReference type="Pfam" id="PF22421">
    <property type="entry name" value="SYY_C-terminal"/>
    <property type="match status" value="1"/>
</dbReference>
<dbReference type="Pfam" id="PF00579">
    <property type="entry name" value="tRNA-synt_1b"/>
    <property type="match status" value="1"/>
</dbReference>
<dbReference type="PRINTS" id="PR01040">
    <property type="entry name" value="TRNASYNTHTYR"/>
</dbReference>
<dbReference type="SUPFAM" id="SSF55174">
    <property type="entry name" value="Alpha-L RNA-binding motif"/>
    <property type="match status" value="1"/>
</dbReference>
<dbReference type="SUPFAM" id="SSF52374">
    <property type="entry name" value="Nucleotidylyl transferase"/>
    <property type="match status" value="1"/>
</dbReference>
<dbReference type="PROSITE" id="PS50889">
    <property type="entry name" value="S4"/>
    <property type="match status" value="1"/>
</dbReference>